<name>RTL4_MOUSE</name>
<gene>
    <name evidence="1" type="primary">Rtl4</name>
    <name type="synonym">Mar4</name>
    <name evidence="6" type="synonym">Mart4</name>
    <name evidence="7" type="synonym">Sirh11</name>
    <name evidence="7" type="synonym">Zcchc16</name>
</gene>
<proteinExistence type="evidence at transcript level"/>
<feature type="chain" id="PRO_0000257495" description="Retrotransposon Gag-like protein 4">
    <location>
        <begin position="1"/>
        <end position="304"/>
    </location>
</feature>
<feature type="zinc finger region" description="CCHC-type" evidence="2">
    <location>
        <begin position="276"/>
        <end position="293"/>
    </location>
</feature>
<feature type="sequence conflict" description="In Ref. 1; BAE23172." evidence="8" ref="1">
    <original>P</original>
    <variation>R</variation>
    <location>
        <position position="62"/>
    </location>
</feature>
<reference key="1">
    <citation type="journal article" date="2005" name="Science">
        <title>The transcriptional landscape of the mammalian genome.</title>
        <authorList>
            <person name="Carninci P."/>
            <person name="Kasukawa T."/>
            <person name="Katayama S."/>
            <person name="Gough J."/>
            <person name="Frith M.C."/>
            <person name="Maeda N."/>
            <person name="Oyama R."/>
            <person name="Ravasi T."/>
            <person name="Lenhard B."/>
            <person name="Wells C."/>
            <person name="Kodzius R."/>
            <person name="Shimokawa K."/>
            <person name="Bajic V.B."/>
            <person name="Brenner S.E."/>
            <person name="Batalov S."/>
            <person name="Forrest A.R."/>
            <person name="Zavolan M."/>
            <person name="Davis M.J."/>
            <person name="Wilming L.G."/>
            <person name="Aidinis V."/>
            <person name="Allen J.E."/>
            <person name="Ambesi-Impiombato A."/>
            <person name="Apweiler R."/>
            <person name="Aturaliya R.N."/>
            <person name="Bailey T.L."/>
            <person name="Bansal M."/>
            <person name="Baxter L."/>
            <person name="Beisel K.W."/>
            <person name="Bersano T."/>
            <person name="Bono H."/>
            <person name="Chalk A.M."/>
            <person name="Chiu K.P."/>
            <person name="Choudhary V."/>
            <person name="Christoffels A."/>
            <person name="Clutterbuck D.R."/>
            <person name="Crowe M.L."/>
            <person name="Dalla E."/>
            <person name="Dalrymple B.P."/>
            <person name="de Bono B."/>
            <person name="Della Gatta G."/>
            <person name="di Bernardo D."/>
            <person name="Down T."/>
            <person name="Engstrom P."/>
            <person name="Fagiolini M."/>
            <person name="Faulkner G."/>
            <person name="Fletcher C.F."/>
            <person name="Fukushima T."/>
            <person name="Furuno M."/>
            <person name="Futaki S."/>
            <person name="Gariboldi M."/>
            <person name="Georgii-Hemming P."/>
            <person name="Gingeras T.R."/>
            <person name="Gojobori T."/>
            <person name="Green R.E."/>
            <person name="Gustincich S."/>
            <person name="Harbers M."/>
            <person name="Hayashi Y."/>
            <person name="Hensch T.K."/>
            <person name="Hirokawa N."/>
            <person name="Hill D."/>
            <person name="Huminiecki L."/>
            <person name="Iacono M."/>
            <person name="Ikeo K."/>
            <person name="Iwama A."/>
            <person name="Ishikawa T."/>
            <person name="Jakt M."/>
            <person name="Kanapin A."/>
            <person name="Katoh M."/>
            <person name="Kawasawa Y."/>
            <person name="Kelso J."/>
            <person name="Kitamura H."/>
            <person name="Kitano H."/>
            <person name="Kollias G."/>
            <person name="Krishnan S.P."/>
            <person name="Kruger A."/>
            <person name="Kummerfeld S.K."/>
            <person name="Kurochkin I.V."/>
            <person name="Lareau L.F."/>
            <person name="Lazarevic D."/>
            <person name="Lipovich L."/>
            <person name="Liu J."/>
            <person name="Liuni S."/>
            <person name="McWilliam S."/>
            <person name="Madan Babu M."/>
            <person name="Madera M."/>
            <person name="Marchionni L."/>
            <person name="Matsuda H."/>
            <person name="Matsuzawa S."/>
            <person name="Miki H."/>
            <person name="Mignone F."/>
            <person name="Miyake S."/>
            <person name="Morris K."/>
            <person name="Mottagui-Tabar S."/>
            <person name="Mulder N."/>
            <person name="Nakano N."/>
            <person name="Nakauchi H."/>
            <person name="Ng P."/>
            <person name="Nilsson R."/>
            <person name="Nishiguchi S."/>
            <person name="Nishikawa S."/>
            <person name="Nori F."/>
            <person name="Ohara O."/>
            <person name="Okazaki Y."/>
            <person name="Orlando V."/>
            <person name="Pang K.C."/>
            <person name="Pavan W.J."/>
            <person name="Pavesi G."/>
            <person name="Pesole G."/>
            <person name="Petrovsky N."/>
            <person name="Piazza S."/>
            <person name="Reed J."/>
            <person name="Reid J.F."/>
            <person name="Ring B.Z."/>
            <person name="Ringwald M."/>
            <person name="Rost B."/>
            <person name="Ruan Y."/>
            <person name="Salzberg S.L."/>
            <person name="Sandelin A."/>
            <person name="Schneider C."/>
            <person name="Schoenbach C."/>
            <person name="Sekiguchi K."/>
            <person name="Semple C.A."/>
            <person name="Seno S."/>
            <person name="Sessa L."/>
            <person name="Sheng Y."/>
            <person name="Shibata Y."/>
            <person name="Shimada H."/>
            <person name="Shimada K."/>
            <person name="Silva D."/>
            <person name="Sinclair B."/>
            <person name="Sperling S."/>
            <person name="Stupka E."/>
            <person name="Sugiura K."/>
            <person name="Sultana R."/>
            <person name="Takenaka Y."/>
            <person name="Taki K."/>
            <person name="Tammoja K."/>
            <person name="Tan S.L."/>
            <person name="Tang S."/>
            <person name="Taylor M.S."/>
            <person name="Tegner J."/>
            <person name="Teichmann S.A."/>
            <person name="Ueda H.R."/>
            <person name="van Nimwegen E."/>
            <person name="Verardo R."/>
            <person name="Wei C.L."/>
            <person name="Yagi K."/>
            <person name="Yamanishi H."/>
            <person name="Zabarovsky E."/>
            <person name="Zhu S."/>
            <person name="Zimmer A."/>
            <person name="Hide W."/>
            <person name="Bult C."/>
            <person name="Grimmond S.M."/>
            <person name="Teasdale R.D."/>
            <person name="Liu E.T."/>
            <person name="Brusic V."/>
            <person name="Quackenbush J."/>
            <person name="Wahlestedt C."/>
            <person name="Mattick J.S."/>
            <person name="Hume D.A."/>
            <person name="Kai C."/>
            <person name="Sasaki D."/>
            <person name="Tomaru Y."/>
            <person name="Fukuda S."/>
            <person name="Kanamori-Katayama M."/>
            <person name="Suzuki M."/>
            <person name="Aoki J."/>
            <person name="Arakawa T."/>
            <person name="Iida J."/>
            <person name="Imamura K."/>
            <person name="Itoh M."/>
            <person name="Kato T."/>
            <person name="Kawaji H."/>
            <person name="Kawagashira N."/>
            <person name="Kawashima T."/>
            <person name="Kojima M."/>
            <person name="Kondo S."/>
            <person name="Konno H."/>
            <person name="Nakano K."/>
            <person name="Ninomiya N."/>
            <person name="Nishio T."/>
            <person name="Okada M."/>
            <person name="Plessy C."/>
            <person name="Shibata K."/>
            <person name="Shiraki T."/>
            <person name="Suzuki S."/>
            <person name="Tagami M."/>
            <person name="Waki K."/>
            <person name="Watahiki A."/>
            <person name="Okamura-Oho Y."/>
            <person name="Suzuki H."/>
            <person name="Kawai J."/>
            <person name="Hayashizaki Y."/>
        </authorList>
    </citation>
    <scope>NUCLEOTIDE SEQUENCE [LARGE SCALE MRNA]</scope>
    <source>
        <strain>C57BL/6J</strain>
        <tissue>Cerebellum</tissue>
    </source>
</reference>
<reference key="2">
    <citation type="journal article" date="2009" name="PLoS Biol.">
        <title>Lineage-specific biology revealed by a finished genome assembly of the mouse.</title>
        <authorList>
            <person name="Church D.M."/>
            <person name="Goodstadt L."/>
            <person name="Hillier L.W."/>
            <person name="Zody M.C."/>
            <person name="Goldstein S."/>
            <person name="She X."/>
            <person name="Bult C.J."/>
            <person name="Agarwala R."/>
            <person name="Cherry J.L."/>
            <person name="DiCuccio M."/>
            <person name="Hlavina W."/>
            <person name="Kapustin Y."/>
            <person name="Meric P."/>
            <person name="Maglott D."/>
            <person name="Birtle Z."/>
            <person name="Marques A.C."/>
            <person name="Graves T."/>
            <person name="Zhou S."/>
            <person name="Teague B."/>
            <person name="Potamousis K."/>
            <person name="Churas C."/>
            <person name="Place M."/>
            <person name="Herschleb J."/>
            <person name="Runnheim R."/>
            <person name="Forrest D."/>
            <person name="Amos-Landgraf J."/>
            <person name="Schwartz D.C."/>
            <person name="Cheng Z."/>
            <person name="Lindblad-Toh K."/>
            <person name="Eichler E.E."/>
            <person name="Ponting C.P."/>
        </authorList>
    </citation>
    <scope>NUCLEOTIDE SEQUENCE [LARGE SCALE GENOMIC DNA]</scope>
    <source>
        <strain>C57BL/6J</strain>
    </source>
</reference>
<reference key="3">
    <citation type="journal article" date="2004" name="Genome Res.">
        <title>The status, quality, and expansion of the NIH full-length cDNA project: the Mammalian Gene Collection (MGC).</title>
        <authorList>
            <consortium name="The MGC Project Team"/>
        </authorList>
    </citation>
    <scope>NUCLEOTIDE SEQUENCE [LARGE SCALE MRNA]</scope>
    <source>
        <tissue>Brain</tissue>
    </source>
</reference>
<reference key="4">
    <citation type="journal article" date="2005" name="Cytogenet. Genome Res.">
        <title>A family of neofunctionalized Ty3/gypsy retrotransposon genes in mammalian genomes.</title>
        <authorList>
            <person name="Brandt J."/>
            <person name="Veith A.-M."/>
            <person name="Volff J.-N."/>
        </authorList>
    </citation>
    <scope>GENE FAMILY</scope>
</reference>
<reference key="5">
    <citation type="journal article" date="2005" name="J. Mol. Evol.">
        <title>A small family of sushi-class retrotransposon-derived genes in mammals and their relation to genomic imprinting.</title>
        <authorList>
            <person name="Youngson N.A."/>
            <person name="Kocialkowski S."/>
            <person name="Peel N."/>
            <person name="Ferguson-Smith A.C."/>
        </authorList>
    </citation>
    <scope>IDENTIFICATION</scope>
</reference>
<reference key="6">
    <citation type="journal article" date="2005" name="Gene">
        <title>Transposable elements as a source of genetic innovation: expression and evolution of a family of retrotransposon-derived neogenes in mammals.</title>
        <authorList>
            <person name="Brandt J."/>
            <person name="Schrauth S."/>
            <person name="Veith A.-M."/>
            <person name="Froschauer A."/>
            <person name="Haneke T."/>
            <person name="Schultheis C."/>
            <person name="Gessler M."/>
            <person name="Leimeister C."/>
            <person name="Volff J.-N."/>
        </authorList>
    </citation>
    <scope>TISSUE SPECIFICITY</scope>
    <scope>DEVELOPMENTAL STAGE</scope>
</reference>
<reference key="7">
    <citation type="journal article" date="2015" name="PLoS Genet.">
        <title>Cognitive Function Related to the Sirh11/Zcchc16 Gene Acquired from an LTR Retrotransposon in Eutherians.</title>
        <authorList>
            <person name="Irie M."/>
            <person name="Yoshikawa M."/>
            <person name="Ono R."/>
            <person name="Iwafune H."/>
            <person name="Furuse T."/>
            <person name="Yamada I."/>
            <person name="Wakana S."/>
            <person name="Yamashita Y."/>
            <person name="Abe T."/>
            <person name="Ishino F."/>
            <person name="Kaneko-Ishino T."/>
        </authorList>
    </citation>
    <scope>FUNCTION</scope>
    <scope>DISRUPTION PHENOTYPE</scope>
    <scope>TISSUE SPECIFICITY</scope>
    <scope>DEVELOPMENTAL STAGE</scope>
</reference>
<dbReference type="EMBL" id="AK136928">
    <property type="protein sequence ID" value="BAE23172.1"/>
    <property type="status" value="ALT_FRAME"/>
    <property type="molecule type" value="mRNA"/>
</dbReference>
<dbReference type="EMBL" id="AK141066">
    <property type="protein sequence ID" value="BAE24557.1"/>
    <property type="molecule type" value="mRNA"/>
</dbReference>
<dbReference type="EMBL" id="AL807791">
    <property type="status" value="NOT_ANNOTATED_CDS"/>
    <property type="molecule type" value="Genomic_DNA"/>
</dbReference>
<dbReference type="EMBL" id="BC138958">
    <property type="protein sequence ID" value="AAI38959.1"/>
    <property type="molecule type" value="mRNA"/>
</dbReference>
<dbReference type="EMBL" id="BC138959">
    <property type="protein sequence ID" value="AAI38960.1"/>
    <property type="molecule type" value="mRNA"/>
</dbReference>
<dbReference type="EMBL" id="BN000783">
    <property type="protein sequence ID" value="CAI99163.1"/>
    <property type="molecule type" value="Genomic_DNA"/>
</dbReference>
<dbReference type="CCDS" id="CCDS41158.1"/>
<dbReference type="RefSeq" id="NP_001028967.2">
    <property type="nucleotide sequence ID" value="NM_001033795.4"/>
</dbReference>
<dbReference type="RefSeq" id="XP_006529015.1">
    <property type="nucleotide sequence ID" value="XM_006528952.2"/>
</dbReference>
<dbReference type="RefSeq" id="XP_011246164.1">
    <property type="nucleotide sequence ID" value="XM_011247862.3"/>
</dbReference>
<dbReference type="RefSeq" id="XP_011246166.1">
    <property type="nucleotide sequence ID" value="XM_011247864.3"/>
</dbReference>
<dbReference type="RefSeq" id="XP_011246167.1">
    <property type="nucleotide sequence ID" value="XM_011247865.3"/>
</dbReference>
<dbReference type="RefSeq" id="XP_011246168.1">
    <property type="nucleotide sequence ID" value="XM_011247866.3"/>
</dbReference>
<dbReference type="RefSeq" id="XP_011246169.1">
    <property type="nucleotide sequence ID" value="XM_011247867.2"/>
</dbReference>
<dbReference type="RefSeq" id="XP_036017961.1">
    <property type="nucleotide sequence ID" value="XM_036162068.1"/>
</dbReference>
<dbReference type="RefSeq" id="XP_036017962.1">
    <property type="nucleotide sequence ID" value="XM_036162069.1"/>
</dbReference>
<dbReference type="RefSeq" id="XP_036017963.1">
    <property type="nucleotide sequence ID" value="XM_036162070.1"/>
</dbReference>
<dbReference type="RefSeq" id="XP_036017964.1">
    <property type="nucleotide sequence ID" value="XM_036162071.1"/>
</dbReference>
<dbReference type="FunCoup" id="Q3URY0">
    <property type="interactions" value="1"/>
</dbReference>
<dbReference type="STRING" id="10090.ENSMUSP00000108462"/>
<dbReference type="GlyGen" id="Q3URY0">
    <property type="glycosylation" value="1 site"/>
</dbReference>
<dbReference type="iPTMnet" id="Q3URY0"/>
<dbReference type="PhosphoSitePlus" id="Q3URY0"/>
<dbReference type="PaxDb" id="10090-ENSMUSP00000108462"/>
<dbReference type="Antibodypedia" id="569">
    <property type="antibodies" value="8 antibodies from 7 providers"/>
</dbReference>
<dbReference type="Ensembl" id="ENSMUST00000096301.5">
    <property type="protein sequence ID" value="ENSMUSP00000108463.3"/>
    <property type="gene ID" value="ENSMUSG00000071679.5"/>
</dbReference>
<dbReference type="Ensembl" id="ENSMUST00000112843.2">
    <property type="protein sequence ID" value="ENSMUSP00000108462.2"/>
    <property type="gene ID" value="ENSMUSG00000071679.5"/>
</dbReference>
<dbReference type="GeneID" id="619287"/>
<dbReference type="KEGG" id="mmu:619287"/>
<dbReference type="UCSC" id="uc009umy.2">
    <property type="organism name" value="mouse"/>
</dbReference>
<dbReference type="AGR" id="MGI:3588192"/>
<dbReference type="CTD" id="340595"/>
<dbReference type="MGI" id="MGI:3588192">
    <property type="gene designation" value="Rtl4"/>
</dbReference>
<dbReference type="VEuPathDB" id="HostDB:ENSMUSG00000071679"/>
<dbReference type="eggNOG" id="ENOG502T727">
    <property type="taxonomic scope" value="Eukaryota"/>
</dbReference>
<dbReference type="GeneTree" id="ENSGT00940000163925"/>
<dbReference type="HOGENOM" id="CLU_000384_20_1_1"/>
<dbReference type="InParanoid" id="Q3URY0"/>
<dbReference type="OMA" id="MMDNLPD"/>
<dbReference type="OrthoDB" id="9516558at2759"/>
<dbReference type="PhylomeDB" id="Q3URY0"/>
<dbReference type="TreeFam" id="TF335133"/>
<dbReference type="BioGRID-ORCS" id="619287">
    <property type="hits" value="1 hit in 79 CRISPR screens"/>
</dbReference>
<dbReference type="ChiTaRS" id="Rtl4">
    <property type="organism name" value="mouse"/>
</dbReference>
<dbReference type="PRO" id="PR:Q3URY0"/>
<dbReference type="Proteomes" id="UP000000589">
    <property type="component" value="Chromosome X"/>
</dbReference>
<dbReference type="RNAct" id="Q3URY0">
    <property type="molecule type" value="protein"/>
</dbReference>
<dbReference type="Bgee" id="ENSMUSG00000071679">
    <property type="expression patterns" value="Expressed in adrenal gland and 24 other cell types or tissues"/>
</dbReference>
<dbReference type="GO" id="GO:0003676">
    <property type="term" value="F:nucleic acid binding"/>
    <property type="evidence" value="ECO:0007669"/>
    <property type="project" value="InterPro"/>
</dbReference>
<dbReference type="GO" id="GO:0008270">
    <property type="term" value="F:zinc ion binding"/>
    <property type="evidence" value="ECO:0007669"/>
    <property type="project" value="UniProtKB-KW"/>
</dbReference>
<dbReference type="GO" id="GO:0050890">
    <property type="term" value="P:cognition"/>
    <property type="evidence" value="ECO:0000315"/>
    <property type="project" value="MGI"/>
</dbReference>
<dbReference type="GO" id="GO:0042415">
    <property type="term" value="P:norepinephrine metabolic process"/>
    <property type="evidence" value="ECO:0000315"/>
    <property type="project" value="MGI"/>
</dbReference>
<dbReference type="Gene3D" id="4.10.60.10">
    <property type="entry name" value="Zinc finger, CCHC-type"/>
    <property type="match status" value="1"/>
</dbReference>
<dbReference type="InterPro" id="IPR001878">
    <property type="entry name" value="Znf_CCHC"/>
</dbReference>
<dbReference type="InterPro" id="IPR036875">
    <property type="entry name" value="Znf_CCHC_sf"/>
</dbReference>
<dbReference type="SUPFAM" id="SSF57756">
    <property type="entry name" value="Retrovirus zinc finger-like domains"/>
    <property type="match status" value="1"/>
</dbReference>
<dbReference type="PROSITE" id="PS50158">
    <property type="entry name" value="ZF_CCHC"/>
    <property type="match status" value="1"/>
</dbReference>
<comment type="function">
    <text evidence="5">Involved in cognitive function in the brain, possibly via the noradrenergic system.</text>
</comment>
<comment type="tissue specificity">
    <text evidence="3 5">In adults, expressed in brain, eye, kidney, ovary and testis (PubMed:15716091, PubMed:26402067). Weakly expressed in thymus, heart and muscle (PubMed:15716091).</text>
</comment>
<comment type="developmental stage">
    <text evidence="3 5">Expressed at 12.5 dpc in almost all tissues tested. Expressed at 14.5 dpc in brain, eye and liver. Weakly expressed in lung, heart and kidney.</text>
</comment>
<comment type="disruption phenotype">
    <text evidence="5">Mutants are viable and don't show growth retardation in the pre- and postnatal periods in either female or male mice (PubMed:26402067). Animals are fertile, even in the case of mating between mutants. They exhibit abnormal behaviors related to cognition, including attention, impulsivity, and working memory (PubMed:26402067). Animals show a reduced recovery rate of noradrenaline in the prefrontal cortex region (PubMed:26402067).</text>
</comment>
<comment type="miscellaneous">
    <text evidence="3 4">RTL4 is one of at least 11 genes called Mar or Mart related to long terminal repeat retrotransposons. They do not correspond to functional retrotransposons, but rather to neofunctionalized retrotransposons genes.</text>
</comment>
<comment type="sequence caution" evidence="8">
    <conflict type="frameshift">
        <sequence resource="EMBL-CDS" id="BAE23172"/>
    </conflict>
</comment>
<protein>
    <recommendedName>
        <fullName evidence="1">Retrotransposon Gag-like protein 4</fullName>
    </recommendedName>
    <alternativeName>
        <fullName evidence="6">Mammalian retrotransposon-derived protein 4</fullName>
    </alternativeName>
    <alternativeName>
        <fullName>Sushi-XF2b protein</fullName>
    </alternativeName>
    <alternativeName>
        <fullName evidence="7">Sushi-ichi-related retrotransposon homolog 11</fullName>
    </alternativeName>
    <alternativeName>
        <fullName evidence="7">Zinc finger CCHC domain-containing protein 16</fullName>
    </alternativeName>
</protein>
<organism>
    <name type="scientific">Mus musculus</name>
    <name type="common">Mouse</name>
    <dbReference type="NCBI Taxonomy" id="10090"/>
    <lineage>
        <taxon>Eukaryota</taxon>
        <taxon>Metazoa</taxon>
        <taxon>Chordata</taxon>
        <taxon>Craniata</taxon>
        <taxon>Vertebrata</taxon>
        <taxon>Euteleostomi</taxon>
        <taxon>Mammalia</taxon>
        <taxon>Eutheria</taxon>
        <taxon>Euarchontoglires</taxon>
        <taxon>Glires</taxon>
        <taxon>Rodentia</taxon>
        <taxon>Myomorpha</taxon>
        <taxon>Muroidea</taxon>
        <taxon>Muridae</taxon>
        <taxon>Murinae</taxon>
        <taxon>Mus</taxon>
        <taxon>Mus</taxon>
    </lineage>
</organism>
<keyword id="KW-0479">Metal-binding</keyword>
<keyword id="KW-1185">Reference proteome</keyword>
<keyword id="KW-0862">Zinc</keyword>
<keyword id="KW-0863">Zinc-finger</keyword>
<accession>Q3URY0</accession>
<accession>A2AMQ0</accession>
<accession>B2RSQ2</accession>
<accession>Q3UVU7</accession>
<evidence type="ECO:0000250" key="1">
    <source>
        <dbReference type="UniProtKB" id="Q6ZR62"/>
    </source>
</evidence>
<evidence type="ECO:0000255" key="2">
    <source>
        <dbReference type="PROSITE-ProRule" id="PRU00047"/>
    </source>
</evidence>
<evidence type="ECO:0000269" key="3">
    <source>
    </source>
</evidence>
<evidence type="ECO:0000269" key="4">
    <source>
    </source>
</evidence>
<evidence type="ECO:0000269" key="5">
    <source>
    </source>
</evidence>
<evidence type="ECO:0000303" key="6">
    <source>
    </source>
</evidence>
<evidence type="ECO:0000303" key="7">
    <source>
    </source>
</evidence>
<evidence type="ECO:0000305" key="8"/>
<sequence>MEKCTESLPNLNAETSFLRGGNLILQPQVQHPTDDKPPITGQVVPALNTPVMSGPYSGDHIPQFHGNPASVKGFFAQVTTYLRALDISNPADNARVKHFFDYLSQQMQNCDVLSESTQNNLLKQYENFVLELQQSFGEPMTQETTPPMNVTVDKSNISPQDATNFQLHAPNLSYRETNQRDQFQNGQADPTQNEEITDIMDNLPDLITQCIQLDKKHKDRPELLQSESHVPMFASTNHYQSFIGPVRPLPKDGPRQLQGAHLPVTPAKRARQQETQLCVYCNQAGHFTRDCLAKRSRTPARKKM</sequence>